<protein>
    <recommendedName>
        <fullName evidence="1">Putative membrane protein insertion efficiency factor</fullName>
    </recommendedName>
</protein>
<evidence type="ECO:0000255" key="1">
    <source>
        <dbReference type="HAMAP-Rule" id="MF_00386"/>
    </source>
</evidence>
<evidence type="ECO:0000256" key="2">
    <source>
        <dbReference type="SAM" id="MobiDB-lite"/>
    </source>
</evidence>
<sequence length="85" mass="9458">MASPLSPGSRILIGLIRGYQLVISPLLGPRCRFHPTCSHYGIEALRRFGMIKGSWLTLKRVLKCHPLNSGGDDPVPPKLDDNREH</sequence>
<name>YIDD_YERPN</name>
<reference key="1">
    <citation type="journal article" date="2006" name="J. Bacteriol.">
        <title>Complete genome sequence of Yersinia pestis strains Antiqua and Nepal516: evidence of gene reduction in an emerging pathogen.</title>
        <authorList>
            <person name="Chain P.S.G."/>
            <person name="Hu P."/>
            <person name="Malfatti S.A."/>
            <person name="Radnedge L."/>
            <person name="Larimer F."/>
            <person name="Vergez L.M."/>
            <person name="Worsham P."/>
            <person name="Chu M.C."/>
            <person name="Andersen G.L."/>
        </authorList>
    </citation>
    <scope>NUCLEOTIDE SEQUENCE [LARGE SCALE GENOMIC DNA]</scope>
    <source>
        <strain>Nepal516</strain>
    </source>
</reference>
<reference key="2">
    <citation type="submission" date="2009-04" db="EMBL/GenBank/DDBJ databases">
        <title>Yersinia pestis Nepal516A whole genome shotgun sequencing project.</title>
        <authorList>
            <person name="Plunkett G. III"/>
            <person name="Anderson B.D."/>
            <person name="Baumler D.J."/>
            <person name="Burland V."/>
            <person name="Cabot E.L."/>
            <person name="Glasner J.D."/>
            <person name="Mau B."/>
            <person name="Neeno-Eckwall E."/>
            <person name="Perna N.T."/>
            <person name="Munk A.C."/>
            <person name="Tapia R."/>
            <person name="Green L.D."/>
            <person name="Rogers Y.C."/>
            <person name="Detter J.C."/>
            <person name="Bruce D.C."/>
            <person name="Brettin T.S."/>
        </authorList>
    </citation>
    <scope>NUCLEOTIDE SEQUENCE [LARGE SCALE GENOMIC DNA]</scope>
    <source>
        <strain>Nepal516</strain>
    </source>
</reference>
<feature type="chain" id="PRO_1000013143" description="Putative membrane protein insertion efficiency factor">
    <location>
        <begin position="1"/>
        <end position="85"/>
    </location>
</feature>
<feature type="region of interest" description="Disordered" evidence="2">
    <location>
        <begin position="66"/>
        <end position="85"/>
    </location>
</feature>
<comment type="function">
    <text evidence="1">Could be involved in insertion of integral membrane proteins into the membrane.</text>
</comment>
<comment type="subcellular location">
    <subcellularLocation>
        <location evidence="1">Cell inner membrane</location>
        <topology evidence="1">Peripheral membrane protein</topology>
        <orientation evidence="1">Cytoplasmic side</orientation>
    </subcellularLocation>
</comment>
<comment type="similarity">
    <text evidence="1">Belongs to the UPF0161 family.</text>
</comment>
<dbReference type="EMBL" id="CP000305">
    <property type="protein sequence ID" value="ABG20285.1"/>
    <property type="molecule type" value="Genomic_DNA"/>
</dbReference>
<dbReference type="EMBL" id="ACNQ01000019">
    <property type="protein sequence ID" value="EEO74881.1"/>
    <property type="molecule type" value="Genomic_DNA"/>
</dbReference>
<dbReference type="KEGG" id="ypn:YPN_3958"/>
<dbReference type="HOGENOM" id="CLU_144811_6_0_6"/>
<dbReference type="Proteomes" id="UP000008936">
    <property type="component" value="Chromosome"/>
</dbReference>
<dbReference type="GO" id="GO:0005886">
    <property type="term" value="C:plasma membrane"/>
    <property type="evidence" value="ECO:0007669"/>
    <property type="project" value="UniProtKB-SubCell"/>
</dbReference>
<dbReference type="HAMAP" id="MF_00386">
    <property type="entry name" value="UPF0161_YidD"/>
    <property type="match status" value="1"/>
</dbReference>
<dbReference type="InterPro" id="IPR002696">
    <property type="entry name" value="Membr_insert_effic_factor_YidD"/>
</dbReference>
<dbReference type="NCBIfam" id="TIGR00278">
    <property type="entry name" value="membrane protein insertion efficiency factor YidD"/>
    <property type="match status" value="1"/>
</dbReference>
<dbReference type="PANTHER" id="PTHR33383">
    <property type="entry name" value="MEMBRANE PROTEIN INSERTION EFFICIENCY FACTOR-RELATED"/>
    <property type="match status" value="1"/>
</dbReference>
<dbReference type="PANTHER" id="PTHR33383:SF1">
    <property type="entry name" value="MEMBRANE PROTEIN INSERTION EFFICIENCY FACTOR-RELATED"/>
    <property type="match status" value="1"/>
</dbReference>
<dbReference type="Pfam" id="PF01809">
    <property type="entry name" value="YidD"/>
    <property type="match status" value="1"/>
</dbReference>
<dbReference type="SMART" id="SM01234">
    <property type="entry name" value="Haemolytic"/>
    <property type="match status" value="1"/>
</dbReference>
<organism>
    <name type="scientific">Yersinia pestis bv. Antiqua (strain Nepal516)</name>
    <dbReference type="NCBI Taxonomy" id="377628"/>
    <lineage>
        <taxon>Bacteria</taxon>
        <taxon>Pseudomonadati</taxon>
        <taxon>Pseudomonadota</taxon>
        <taxon>Gammaproteobacteria</taxon>
        <taxon>Enterobacterales</taxon>
        <taxon>Yersiniaceae</taxon>
        <taxon>Yersinia</taxon>
    </lineage>
</organism>
<gene>
    <name type="ordered locus">YPN_3958</name>
    <name type="ORF">YP516_4491</name>
</gene>
<accession>Q1CCJ5</accession>
<accession>D1Q2X8</accession>
<proteinExistence type="inferred from homology"/>
<keyword id="KW-0997">Cell inner membrane</keyword>
<keyword id="KW-1003">Cell membrane</keyword>
<keyword id="KW-0472">Membrane</keyword>